<evidence type="ECO:0000305" key="1"/>
<sequence>MAKTEAPSLVGKLETEVEIKASAGQFHHMFAGKPHHVSKASPGNIQSCDLHEGDWGTVGSIVFWNYVHDGEAKVAKERIEAVEPEKNLITFRVIEGDLMKEYKSFLITIQVTPKHGGPGSIVHWHLEYEKISDEVAHPETLLQFCVEVSQEIDEHLLSEEEEVKTTETLETEVEIKASAEKFHHMFAGKPHHVSKATPGNIQSCDLHEGDWGTVGSIVFWNYVHDGEAKVAKERIEAVDPEKNLITFRVIEGDLMKEYKSFVITIQVTPKHGGSGSVVHWHFEYEKINEEVAHPETLLQFAVEVSKEIDEHLLAEE</sequence>
<name>MLP34_ARATH</name>
<gene>
    <name type="primary">MLP34</name>
    <name type="ordered locus">At1g70850</name>
    <name type="ORF">F15H11.10</name>
</gene>
<feature type="chain" id="PRO_0000210070" description="MLP-like protein 34">
    <location>
        <begin position="1"/>
        <end position="316"/>
    </location>
</feature>
<keyword id="KW-0025">Alternative splicing</keyword>
<keyword id="KW-1185">Reference proteome</keyword>
<dbReference type="EMBL" id="AJ306141">
    <property type="protein sequence ID" value="CAC83579.1"/>
    <property type="molecule type" value="Genomic_DNA"/>
</dbReference>
<dbReference type="EMBL" id="AC008148">
    <property type="protein sequence ID" value="AAD55503.1"/>
    <property type="molecule type" value="Genomic_DNA"/>
</dbReference>
<dbReference type="EMBL" id="CP002684">
    <property type="protein sequence ID" value="AEE35127.1"/>
    <property type="molecule type" value="Genomic_DNA"/>
</dbReference>
<dbReference type="EMBL" id="CP002684">
    <property type="protein sequence ID" value="AEE35129.1"/>
    <property type="molecule type" value="Genomic_DNA"/>
</dbReference>
<dbReference type="EMBL" id="AF372899">
    <property type="protein sequence ID" value="AAK49615.1"/>
    <property type="molecule type" value="mRNA"/>
</dbReference>
<dbReference type="EMBL" id="AY057726">
    <property type="protein sequence ID" value="AAL15356.1"/>
    <property type="molecule type" value="mRNA"/>
</dbReference>
<dbReference type="PIR" id="C96733">
    <property type="entry name" value="C96733"/>
</dbReference>
<dbReference type="RefSeq" id="NP_001031265.1">
    <molecule id="Q9SSK7-1"/>
    <property type="nucleotide sequence ID" value="NM_001036188.1"/>
</dbReference>
<dbReference type="RefSeq" id="NP_850976.1">
    <molecule id="Q9SSK7-1"/>
    <property type="nucleotide sequence ID" value="NM_180645.3"/>
</dbReference>
<dbReference type="SMR" id="Q9SSK7"/>
<dbReference type="FunCoup" id="Q9SSK7">
    <property type="interactions" value="95"/>
</dbReference>
<dbReference type="IntAct" id="Q9SSK7">
    <property type="interactions" value="1"/>
</dbReference>
<dbReference type="STRING" id="3702.Q9SSK7"/>
<dbReference type="GlyGen" id="Q9SSK7">
    <property type="glycosylation" value="1 site"/>
</dbReference>
<dbReference type="PaxDb" id="3702-AT1G70850.1"/>
<dbReference type="ProteomicsDB" id="238368">
    <molecule id="Q9SSK7-1"/>
</dbReference>
<dbReference type="EnsemblPlants" id="AT1G70850.1">
    <molecule id="Q9SSK7-1"/>
    <property type="protein sequence ID" value="AT1G70850.1"/>
    <property type="gene ID" value="AT1G70850"/>
</dbReference>
<dbReference type="EnsemblPlants" id="AT1G70850.3">
    <molecule id="Q9SSK7-1"/>
    <property type="protein sequence ID" value="AT1G70850.3"/>
    <property type="gene ID" value="AT1G70850"/>
</dbReference>
<dbReference type="GeneID" id="843422"/>
<dbReference type="Gramene" id="AT1G70850.1">
    <molecule id="Q9SSK7-1"/>
    <property type="protein sequence ID" value="AT1G70850.1"/>
    <property type="gene ID" value="AT1G70850"/>
</dbReference>
<dbReference type="Gramene" id="AT1G70850.3">
    <molecule id="Q9SSK7-1"/>
    <property type="protein sequence ID" value="AT1G70850.3"/>
    <property type="gene ID" value="AT1G70850"/>
</dbReference>
<dbReference type="KEGG" id="ath:AT1G70850"/>
<dbReference type="Araport" id="AT1G70850"/>
<dbReference type="TAIR" id="AT1G70850">
    <property type="gene designation" value="MLP34"/>
</dbReference>
<dbReference type="eggNOG" id="ENOG502RN75">
    <property type="taxonomic scope" value="Eukaryota"/>
</dbReference>
<dbReference type="HOGENOM" id="CLU_081988_0_0_1"/>
<dbReference type="InParanoid" id="Q9SSK7"/>
<dbReference type="PhylomeDB" id="Q9SSK7"/>
<dbReference type="PRO" id="PR:Q9SSK7"/>
<dbReference type="Proteomes" id="UP000006548">
    <property type="component" value="Chromosome 1"/>
</dbReference>
<dbReference type="ExpressionAtlas" id="Q9SSK7">
    <property type="expression patterns" value="baseline and differential"/>
</dbReference>
<dbReference type="GO" id="GO:0006952">
    <property type="term" value="P:defense response"/>
    <property type="evidence" value="ECO:0007669"/>
    <property type="project" value="InterPro"/>
</dbReference>
<dbReference type="CDD" id="cd07816">
    <property type="entry name" value="Bet_v1-like"/>
    <property type="match status" value="2"/>
</dbReference>
<dbReference type="Gene3D" id="3.30.530.20">
    <property type="match status" value="2"/>
</dbReference>
<dbReference type="InterPro" id="IPR000916">
    <property type="entry name" value="Bet_v_I/MLP"/>
</dbReference>
<dbReference type="InterPro" id="IPR051761">
    <property type="entry name" value="MLP-like_ligand-binding"/>
</dbReference>
<dbReference type="InterPro" id="IPR023393">
    <property type="entry name" value="START-like_dom_sf"/>
</dbReference>
<dbReference type="PANTHER" id="PTHR31907">
    <property type="entry name" value="MLP-LIKE PROTEIN 423"/>
    <property type="match status" value="1"/>
</dbReference>
<dbReference type="Pfam" id="PF00407">
    <property type="entry name" value="Bet_v_1"/>
    <property type="match status" value="2"/>
</dbReference>
<dbReference type="SMART" id="SM01037">
    <property type="entry name" value="Bet_v_1"/>
    <property type="match status" value="2"/>
</dbReference>
<dbReference type="SUPFAM" id="SSF55961">
    <property type="entry name" value="Bet v1-like"/>
    <property type="match status" value="2"/>
</dbReference>
<protein>
    <recommendedName>
        <fullName>MLP-like protein 34</fullName>
    </recommendedName>
</protein>
<organism>
    <name type="scientific">Arabidopsis thaliana</name>
    <name type="common">Mouse-ear cress</name>
    <dbReference type="NCBI Taxonomy" id="3702"/>
    <lineage>
        <taxon>Eukaryota</taxon>
        <taxon>Viridiplantae</taxon>
        <taxon>Streptophyta</taxon>
        <taxon>Embryophyta</taxon>
        <taxon>Tracheophyta</taxon>
        <taxon>Spermatophyta</taxon>
        <taxon>Magnoliopsida</taxon>
        <taxon>eudicotyledons</taxon>
        <taxon>Gunneridae</taxon>
        <taxon>Pentapetalae</taxon>
        <taxon>rosids</taxon>
        <taxon>malvids</taxon>
        <taxon>Brassicales</taxon>
        <taxon>Brassicaceae</taxon>
        <taxon>Camelineae</taxon>
        <taxon>Arabidopsis</taxon>
    </lineage>
</organism>
<reference key="1">
    <citation type="submission" date="2001-01" db="EMBL/GenBank/DDBJ databases">
        <title>Molecular and phylogenetic analysis of a gene family in Arabidopsis thaliana with similarities to major latex, pathogenesis-related and ripening-induced proteins.</title>
        <authorList>
            <person name="Muller S."/>
            <person name="Klimt S."/>
            <person name="Hauser M.T."/>
        </authorList>
    </citation>
    <scope>NUCLEOTIDE SEQUENCE [GENOMIC DNA]</scope>
    <source>
        <strain>cv. Columbia</strain>
    </source>
</reference>
<reference key="2">
    <citation type="journal article" date="2000" name="Nature">
        <title>Sequence and analysis of chromosome 1 of the plant Arabidopsis thaliana.</title>
        <authorList>
            <person name="Theologis A."/>
            <person name="Ecker J.R."/>
            <person name="Palm C.J."/>
            <person name="Federspiel N.A."/>
            <person name="Kaul S."/>
            <person name="White O."/>
            <person name="Alonso J."/>
            <person name="Altafi H."/>
            <person name="Araujo R."/>
            <person name="Bowman C.L."/>
            <person name="Brooks S.Y."/>
            <person name="Buehler E."/>
            <person name="Chan A."/>
            <person name="Chao Q."/>
            <person name="Chen H."/>
            <person name="Cheuk R.F."/>
            <person name="Chin C.W."/>
            <person name="Chung M.K."/>
            <person name="Conn L."/>
            <person name="Conway A.B."/>
            <person name="Conway A.R."/>
            <person name="Creasy T.H."/>
            <person name="Dewar K."/>
            <person name="Dunn P."/>
            <person name="Etgu P."/>
            <person name="Feldblyum T.V."/>
            <person name="Feng J.-D."/>
            <person name="Fong B."/>
            <person name="Fujii C.Y."/>
            <person name="Gill J.E."/>
            <person name="Goldsmith A.D."/>
            <person name="Haas B."/>
            <person name="Hansen N.F."/>
            <person name="Hughes B."/>
            <person name="Huizar L."/>
            <person name="Hunter J.L."/>
            <person name="Jenkins J."/>
            <person name="Johnson-Hopson C."/>
            <person name="Khan S."/>
            <person name="Khaykin E."/>
            <person name="Kim C.J."/>
            <person name="Koo H.L."/>
            <person name="Kremenetskaia I."/>
            <person name="Kurtz D.B."/>
            <person name="Kwan A."/>
            <person name="Lam B."/>
            <person name="Langin-Hooper S."/>
            <person name="Lee A."/>
            <person name="Lee J.M."/>
            <person name="Lenz C.A."/>
            <person name="Li J.H."/>
            <person name="Li Y.-P."/>
            <person name="Lin X."/>
            <person name="Liu S.X."/>
            <person name="Liu Z.A."/>
            <person name="Luros J.S."/>
            <person name="Maiti R."/>
            <person name="Marziali A."/>
            <person name="Militscher J."/>
            <person name="Miranda M."/>
            <person name="Nguyen M."/>
            <person name="Nierman W.C."/>
            <person name="Osborne B.I."/>
            <person name="Pai G."/>
            <person name="Peterson J."/>
            <person name="Pham P.K."/>
            <person name="Rizzo M."/>
            <person name="Rooney T."/>
            <person name="Rowley D."/>
            <person name="Sakano H."/>
            <person name="Salzberg S.L."/>
            <person name="Schwartz J.R."/>
            <person name="Shinn P."/>
            <person name="Southwick A.M."/>
            <person name="Sun H."/>
            <person name="Tallon L.J."/>
            <person name="Tambunga G."/>
            <person name="Toriumi M.J."/>
            <person name="Town C.D."/>
            <person name="Utterback T."/>
            <person name="Van Aken S."/>
            <person name="Vaysberg M."/>
            <person name="Vysotskaia V.S."/>
            <person name="Walker M."/>
            <person name="Wu D."/>
            <person name="Yu G."/>
            <person name="Fraser C.M."/>
            <person name="Venter J.C."/>
            <person name="Davis R.W."/>
        </authorList>
    </citation>
    <scope>NUCLEOTIDE SEQUENCE [LARGE SCALE GENOMIC DNA]</scope>
    <source>
        <strain>cv. Columbia</strain>
    </source>
</reference>
<reference key="3">
    <citation type="journal article" date="2017" name="Plant J.">
        <title>Araport11: a complete reannotation of the Arabidopsis thaliana reference genome.</title>
        <authorList>
            <person name="Cheng C.Y."/>
            <person name="Krishnakumar V."/>
            <person name="Chan A.P."/>
            <person name="Thibaud-Nissen F."/>
            <person name="Schobel S."/>
            <person name="Town C.D."/>
        </authorList>
    </citation>
    <scope>GENOME REANNOTATION</scope>
    <source>
        <strain>cv. Columbia</strain>
    </source>
</reference>
<reference key="4">
    <citation type="journal article" date="2003" name="Science">
        <title>Empirical analysis of transcriptional activity in the Arabidopsis genome.</title>
        <authorList>
            <person name="Yamada K."/>
            <person name="Lim J."/>
            <person name="Dale J.M."/>
            <person name="Chen H."/>
            <person name="Shinn P."/>
            <person name="Palm C.J."/>
            <person name="Southwick A.M."/>
            <person name="Wu H.C."/>
            <person name="Kim C.J."/>
            <person name="Nguyen M."/>
            <person name="Pham P.K."/>
            <person name="Cheuk R.F."/>
            <person name="Karlin-Newmann G."/>
            <person name="Liu S.X."/>
            <person name="Lam B."/>
            <person name="Sakano H."/>
            <person name="Wu T."/>
            <person name="Yu G."/>
            <person name="Miranda M."/>
            <person name="Quach H.L."/>
            <person name="Tripp M."/>
            <person name="Chang C.H."/>
            <person name="Lee J.M."/>
            <person name="Toriumi M.J."/>
            <person name="Chan M.M."/>
            <person name="Tang C.C."/>
            <person name="Onodera C.S."/>
            <person name="Deng J.M."/>
            <person name="Akiyama K."/>
            <person name="Ansari Y."/>
            <person name="Arakawa T."/>
            <person name="Banh J."/>
            <person name="Banno F."/>
            <person name="Bowser L."/>
            <person name="Brooks S.Y."/>
            <person name="Carninci P."/>
            <person name="Chao Q."/>
            <person name="Choy N."/>
            <person name="Enju A."/>
            <person name="Goldsmith A.D."/>
            <person name="Gurjal M."/>
            <person name="Hansen N.F."/>
            <person name="Hayashizaki Y."/>
            <person name="Johnson-Hopson C."/>
            <person name="Hsuan V.W."/>
            <person name="Iida K."/>
            <person name="Karnes M."/>
            <person name="Khan S."/>
            <person name="Koesema E."/>
            <person name="Ishida J."/>
            <person name="Jiang P.X."/>
            <person name="Jones T."/>
            <person name="Kawai J."/>
            <person name="Kamiya A."/>
            <person name="Meyers C."/>
            <person name="Nakajima M."/>
            <person name="Narusaka M."/>
            <person name="Seki M."/>
            <person name="Sakurai T."/>
            <person name="Satou M."/>
            <person name="Tamse R."/>
            <person name="Vaysberg M."/>
            <person name="Wallender E.K."/>
            <person name="Wong C."/>
            <person name="Yamamura Y."/>
            <person name="Yuan S."/>
            <person name="Shinozaki K."/>
            <person name="Davis R.W."/>
            <person name="Theologis A."/>
            <person name="Ecker J.R."/>
        </authorList>
    </citation>
    <scope>NUCLEOTIDE SEQUENCE [LARGE SCALE MRNA]</scope>
    <source>
        <strain>cv. Columbia</strain>
    </source>
</reference>
<proteinExistence type="evidence at transcript level"/>
<accession>Q9SSK7</accession>
<comment type="alternative products">
    <event type="alternative splicing"/>
    <isoform>
        <id>Q9SSK7-1</id>
        <name>1</name>
        <sequence type="displayed"/>
    </isoform>
    <text>A number of isoforms are produced. According to EST sequences.</text>
</comment>
<comment type="similarity">
    <text evidence="1">Belongs to the MLP family.</text>
</comment>